<proteinExistence type="inferred from homology"/>
<gene>
    <name evidence="1" type="primary">msrQ</name>
    <name type="ordered locus">SEN3212</name>
</gene>
<reference key="1">
    <citation type="journal article" date="2008" name="Genome Res.">
        <title>Comparative genome analysis of Salmonella enteritidis PT4 and Salmonella gallinarum 287/91 provides insights into evolutionary and host adaptation pathways.</title>
        <authorList>
            <person name="Thomson N.R."/>
            <person name="Clayton D.J."/>
            <person name="Windhorst D."/>
            <person name="Vernikos G."/>
            <person name="Davidson S."/>
            <person name="Churcher C."/>
            <person name="Quail M.A."/>
            <person name="Stevens M."/>
            <person name="Jones M.A."/>
            <person name="Watson M."/>
            <person name="Barron A."/>
            <person name="Layton A."/>
            <person name="Pickard D."/>
            <person name="Kingsley R.A."/>
            <person name="Bignell A."/>
            <person name="Clark L."/>
            <person name="Harris B."/>
            <person name="Ormond D."/>
            <person name="Abdellah Z."/>
            <person name="Brooks K."/>
            <person name="Cherevach I."/>
            <person name="Chillingworth T."/>
            <person name="Woodward J."/>
            <person name="Norberczak H."/>
            <person name="Lord A."/>
            <person name="Arrowsmith C."/>
            <person name="Jagels K."/>
            <person name="Moule S."/>
            <person name="Mungall K."/>
            <person name="Saunders M."/>
            <person name="Whitehead S."/>
            <person name="Chabalgoity J.A."/>
            <person name="Maskell D."/>
            <person name="Humphreys T."/>
            <person name="Roberts M."/>
            <person name="Barrow P.A."/>
            <person name="Dougan G."/>
            <person name="Parkhill J."/>
        </authorList>
    </citation>
    <scope>NUCLEOTIDE SEQUENCE [LARGE SCALE GENOMIC DNA]</scope>
    <source>
        <strain>P125109</strain>
    </source>
</reference>
<accession>B5R1C1</accession>
<name>MSRQ_SALEP</name>
<feature type="chain" id="PRO_1000138742" description="Protein-methionine-sulfoxide reductase heme-binding subunit MsrQ">
    <location>
        <begin position="1"/>
        <end position="199"/>
    </location>
</feature>
<feature type="transmembrane region" description="Helical" evidence="1">
    <location>
        <begin position="10"/>
        <end position="30"/>
    </location>
</feature>
<feature type="transmembrane region" description="Helical" evidence="1">
    <location>
        <begin position="82"/>
        <end position="102"/>
    </location>
</feature>
<feature type="transmembrane region" description="Helical" evidence="1">
    <location>
        <begin position="116"/>
        <end position="136"/>
    </location>
</feature>
<feature type="transmembrane region" description="Helical" evidence="1">
    <location>
        <begin position="153"/>
        <end position="173"/>
    </location>
</feature>
<organism>
    <name type="scientific">Salmonella enteritidis PT4 (strain P125109)</name>
    <dbReference type="NCBI Taxonomy" id="550537"/>
    <lineage>
        <taxon>Bacteria</taxon>
        <taxon>Pseudomonadati</taxon>
        <taxon>Pseudomonadota</taxon>
        <taxon>Gammaproteobacteria</taxon>
        <taxon>Enterobacterales</taxon>
        <taxon>Enterobacteriaceae</taxon>
        <taxon>Salmonella</taxon>
    </lineage>
</organism>
<sequence length="199" mass="22896">MRLTAKQITWLKVCLHLAGFLPLLWLFWAINHGGLSADPVKDIQHFTGRTALKFLLATLLVSPLARYAKQPLLIRTRRLLGLWCFVWATLHLTSYALLELGIHNLALLGSELISRPYLTLGIISWLVLLALTLTSTQFAQRKLGKRWQTLHNVVYLVAILAPIHYLWSVKILSPQPVIYAALALALLALRYRRFRQWWR</sequence>
<dbReference type="EMBL" id="AM933172">
    <property type="protein sequence ID" value="CAR34787.1"/>
    <property type="molecule type" value="Genomic_DNA"/>
</dbReference>
<dbReference type="RefSeq" id="WP_001240054.1">
    <property type="nucleotide sequence ID" value="NC_011294.1"/>
</dbReference>
<dbReference type="SMR" id="B5R1C1"/>
<dbReference type="KEGG" id="set:SEN3212"/>
<dbReference type="HOGENOM" id="CLU_080662_1_0_6"/>
<dbReference type="Proteomes" id="UP000000613">
    <property type="component" value="Chromosome"/>
</dbReference>
<dbReference type="GO" id="GO:0005886">
    <property type="term" value="C:plasma membrane"/>
    <property type="evidence" value="ECO:0007669"/>
    <property type="project" value="UniProtKB-SubCell"/>
</dbReference>
<dbReference type="GO" id="GO:0009055">
    <property type="term" value="F:electron transfer activity"/>
    <property type="evidence" value="ECO:0007669"/>
    <property type="project" value="UniProtKB-UniRule"/>
</dbReference>
<dbReference type="GO" id="GO:0010181">
    <property type="term" value="F:FMN binding"/>
    <property type="evidence" value="ECO:0007669"/>
    <property type="project" value="UniProtKB-UniRule"/>
</dbReference>
<dbReference type="GO" id="GO:0020037">
    <property type="term" value="F:heme binding"/>
    <property type="evidence" value="ECO:0007669"/>
    <property type="project" value="UniProtKB-UniRule"/>
</dbReference>
<dbReference type="GO" id="GO:0046872">
    <property type="term" value="F:metal ion binding"/>
    <property type="evidence" value="ECO:0007669"/>
    <property type="project" value="UniProtKB-KW"/>
</dbReference>
<dbReference type="GO" id="GO:0016679">
    <property type="term" value="F:oxidoreductase activity, acting on diphenols and related substances as donors"/>
    <property type="evidence" value="ECO:0007669"/>
    <property type="project" value="TreeGrafter"/>
</dbReference>
<dbReference type="GO" id="GO:0030091">
    <property type="term" value="P:protein repair"/>
    <property type="evidence" value="ECO:0007669"/>
    <property type="project" value="UniProtKB-UniRule"/>
</dbReference>
<dbReference type="HAMAP" id="MF_01207">
    <property type="entry name" value="MsrQ"/>
    <property type="match status" value="1"/>
</dbReference>
<dbReference type="InterPro" id="IPR013130">
    <property type="entry name" value="Fe3_Rdtase_TM_dom"/>
</dbReference>
<dbReference type="InterPro" id="IPR022837">
    <property type="entry name" value="MsrQ-like"/>
</dbReference>
<dbReference type="NCBIfam" id="NF003831">
    <property type="entry name" value="PRK05419.1-2"/>
    <property type="match status" value="1"/>
</dbReference>
<dbReference type="NCBIfam" id="NF003832">
    <property type="entry name" value="PRK05419.1-4"/>
    <property type="match status" value="1"/>
</dbReference>
<dbReference type="PANTHER" id="PTHR36964">
    <property type="entry name" value="PROTEIN-METHIONINE-SULFOXIDE REDUCTASE HEME-BINDING SUBUNIT MSRQ"/>
    <property type="match status" value="1"/>
</dbReference>
<dbReference type="PANTHER" id="PTHR36964:SF1">
    <property type="entry name" value="PROTEIN-METHIONINE-SULFOXIDE REDUCTASE HEME-BINDING SUBUNIT MSRQ"/>
    <property type="match status" value="1"/>
</dbReference>
<dbReference type="Pfam" id="PF01794">
    <property type="entry name" value="Ferric_reduct"/>
    <property type="match status" value="1"/>
</dbReference>
<keyword id="KW-0997">Cell inner membrane</keyword>
<keyword id="KW-1003">Cell membrane</keyword>
<keyword id="KW-0249">Electron transport</keyword>
<keyword id="KW-0285">Flavoprotein</keyword>
<keyword id="KW-0288">FMN</keyword>
<keyword id="KW-0349">Heme</keyword>
<keyword id="KW-0408">Iron</keyword>
<keyword id="KW-0472">Membrane</keyword>
<keyword id="KW-0479">Metal-binding</keyword>
<keyword id="KW-0812">Transmembrane</keyword>
<keyword id="KW-1133">Transmembrane helix</keyword>
<keyword id="KW-0813">Transport</keyword>
<comment type="function">
    <text evidence="1">Part of the MsrPQ system that repairs oxidized periplasmic proteins containing methionine sulfoxide residues (Met-O), using respiratory chain electrons. Thus protects these proteins from oxidative-stress damage caused by reactive species of oxygen and chlorine generated by the host defense mechanisms. MsrPQ is essential for the maintenance of envelope integrity under bleach stress, rescuing a wide series of structurally unrelated periplasmic proteins from methionine oxidation, including the primary periplasmic chaperone SurA and the lipoprotein Pal. MsrQ provides electrons for reduction to the reductase catalytic subunit MsrP, using the quinone pool of the respiratory chain.</text>
</comment>
<comment type="cofactor">
    <cofactor evidence="1">
        <name>FMN</name>
        <dbReference type="ChEBI" id="CHEBI:58210"/>
    </cofactor>
    <text evidence="1">Binds 1 FMN per subunit.</text>
</comment>
<comment type="cofactor">
    <cofactor evidence="1">
        <name>heme b</name>
        <dbReference type="ChEBI" id="CHEBI:60344"/>
    </cofactor>
    <text evidence="1">Binds 1 heme b (iron(II)-protoporphyrin IX) group per subunit.</text>
</comment>
<comment type="subunit">
    <text evidence="1">Heterodimer of a catalytic subunit (MsrP) and a heme-binding subunit (MsrQ).</text>
</comment>
<comment type="subcellular location">
    <subcellularLocation>
        <location evidence="1">Cell inner membrane</location>
        <topology evidence="1">Multi-pass membrane protein</topology>
    </subcellularLocation>
</comment>
<comment type="similarity">
    <text evidence="1">Belongs to the MsrQ family.</text>
</comment>
<evidence type="ECO:0000255" key="1">
    <source>
        <dbReference type="HAMAP-Rule" id="MF_01207"/>
    </source>
</evidence>
<protein>
    <recommendedName>
        <fullName evidence="1">Protein-methionine-sulfoxide reductase heme-binding subunit MsrQ</fullName>
    </recommendedName>
    <alternativeName>
        <fullName evidence="1">Flavocytochrome MsrQ</fullName>
    </alternativeName>
</protein>